<gene>
    <name evidence="1" type="primary">luxS</name>
    <name type="ordered locus">SSPA2494</name>
</gene>
<keyword id="KW-0071">Autoinducer synthesis</keyword>
<keyword id="KW-0408">Iron</keyword>
<keyword id="KW-0456">Lyase</keyword>
<keyword id="KW-0479">Metal-binding</keyword>
<keyword id="KW-0673">Quorum sensing</keyword>
<evidence type="ECO:0000255" key="1">
    <source>
        <dbReference type="HAMAP-Rule" id="MF_00091"/>
    </source>
</evidence>
<feature type="chain" id="PRO_1000093326" description="S-ribosylhomocysteine lyase">
    <location>
        <begin position="1"/>
        <end position="171"/>
    </location>
</feature>
<feature type="binding site" evidence="1">
    <location>
        <position position="54"/>
    </location>
    <ligand>
        <name>Fe cation</name>
        <dbReference type="ChEBI" id="CHEBI:24875"/>
    </ligand>
</feature>
<feature type="binding site" evidence="1">
    <location>
        <position position="58"/>
    </location>
    <ligand>
        <name>Fe cation</name>
        <dbReference type="ChEBI" id="CHEBI:24875"/>
    </ligand>
</feature>
<feature type="binding site" evidence="1">
    <location>
        <position position="128"/>
    </location>
    <ligand>
        <name>Fe cation</name>
        <dbReference type="ChEBI" id="CHEBI:24875"/>
    </ligand>
</feature>
<protein>
    <recommendedName>
        <fullName evidence="1">S-ribosylhomocysteine lyase</fullName>
        <ecNumber evidence="1">4.4.1.21</ecNumber>
    </recommendedName>
    <alternativeName>
        <fullName evidence="1">AI-2 synthesis protein</fullName>
    </alternativeName>
    <alternativeName>
        <fullName evidence="1">Autoinducer-2 production protein LuxS</fullName>
    </alternativeName>
</protein>
<comment type="function">
    <text evidence="1">Involved in the synthesis of autoinducer 2 (AI-2) which is secreted by bacteria and is used to communicate both the cell density and the metabolic potential of the environment. The regulation of gene expression in response to changes in cell density is called quorum sensing. Catalyzes the transformation of S-ribosylhomocysteine (RHC) to homocysteine (HC) and 4,5-dihydroxy-2,3-pentadione (DPD).</text>
</comment>
<comment type="catalytic activity">
    <reaction evidence="1">
        <text>S-(5-deoxy-D-ribos-5-yl)-L-homocysteine = (S)-4,5-dihydroxypentane-2,3-dione + L-homocysteine</text>
        <dbReference type="Rhea" id="RHEA:17753"/>
        <dbReference type="ChEBI" id="CHEBI:29484"/>
        <dbReference type="ChEBI" id="CHEBI:58195"/>
        <dbReference type="ChEBI" id="CHEBI:58199"/>
        <dbReference type="EC" id="4.4.1.21"/>
    </reaction>
</comment>
<comment type="cofactor">
    <cofactor evidence="1">
        <name>Fe cation</name>
        <dbReference type="ChEBI" id="CHEBI:24875"/>
    </cofactor>
    <text evidence="1">Binds 1 Fe cation per subunit.</text>
</comment>
<comment type="subunit">
    <text evidence="1">Homodimer.</text>
</comment>
<comment type="similarity">
    <text evidence="1">Belongs to the LuxS family.</text>
</comment>
<name>LUXS_SALPK</name>
<organism>
    <name type="scientific">Salmonella paratyphi A (strain AKU_12601)</name>
    <dbReference type="NCBI Taxonomy" id="554290"/>
    <lineage>
        <taxon>Bacteria</taxon>
        <taxon>Pseudomonadati</taxon>
        <taxon>Pseudomonadota</taxon>
        <taxon>Gammaproteobacteria</taxon>
        <taxon>Enterobacterales</taxon>
        <taxon>Enterobacteriaceae</taxon>
        <taxon>Salmonella</taxon>
    </lineage>
</organism>
<sequence length="171" mass="19308">MPLLDSFAVDHTRMQAPAVRVAKTMNTPHGDAITVFDLRFCIPNKEVMPEKGIHTLEHLFAGFMRDHLNGNGVEIIDISPMGCRTGFYMSLIGTPDEQRVADAWKAAMADVLKVQDQNQIPELNVYQCGTYQMHSLSEAQDIARHILERDVRVNSNKELALPKEKLQELHI</sequence>
<reference key="1">
    <citation type="journal article" date="2009" name="BMC Genomics">
        <title>Pseudogene accumulation in the evolutionary histories of Salmonella enterica serovars Paratyphi A and Typhi.</title>
        <authorList>
            <person name="Holt K.E."/>
            <person name="Thomson N.R."/>
            <person name="Wain J."/>
            <person name="Langridge G.C."/>
            <person name="Hasan R."/>
            <person name="Bhutta Z.A."/>
            <person name="Quail M.A."/>
            <person name="Norbertczak H."/>
            <person name="Walker D."/>
            <person name="Simmonds M."/>
            <person name="White B."/>
            <person name="Bason N."/>
            <person name="Mungall K."/>
            <person name="Dougan G."/>
            <person name="Parkhill J."/>
        </authorList>
    </citation>
    <scope>NUCLEOTIDE SEQUENCE [LARGE SCALE GENOMIC DNA]</scope>
    <source>
        <strain>AKU_12601</strain>
    </source>
</reference>
<dbReference type="EC" id="4.4.1.21" evidence="1"/>
<dbReference type="EMBL" id="FM200053">
    <property type="protein sequence ID" value="CAR60730.1"/>
    <property type="molecule type" value="Genomic_DNA"/>
</dbReference>
<dbReference type="RefSeq" id="WP_001130194.1">
    <property type="nucleotide sequence ID" value="NC_011147.1"/>
</dbReference>
<dbReference type="SMR" id="B5BEN0"/>
<dbReference type="KEGG" id="sek:SSPA2494"/>
<dbReference type="HOGENOM" id="CLU_107531_2_0_6"/>
<dbReference type="Proteomes" id="UP000001869">
    <property type="component" value="Chromosome"/>
</dbReference>
<dbReference type="GO" id="GO:0005506">
    <property type="term" value="F:iron ion binding"/>
    <property type="evidence" value="ECO:0007669"/>
    <property type="project" value="InterPro"/>
</dbReference>
<dbReference type="GO" id="GO:0043768">
    <property type="term" value="F:S-ribosylhomocysteine lyase activity"/>
    <property type="evidence" value="ECO:0007669"/>
    <property type="project" value="UniProtKB-UniRule"/>
</dbReference>
<dbReference type="GO" id="GO:0009372">
    <property type="term" value="P:quorum sensing"/>
    <property type="evidence" value="ECO:0007669"/>
    <property type="project" value="UniProtKB-UniRule"/>
</dbReference>
<dbReference type="FunFam" id="3.30.1360.80:FF:000001">
    <property type="entry name" value="S-ribosylhomocysteine lyase"/>
    <property type="match status" value="1"/>
</dbReference>
<dbReference type="Gene3D" id="3.30.1360.80">
    <property type="entry name" value="S-ribosylhomocysteinase (LuxS)"/>
    <property type="match status" value="1"/>
</dbReference>
<dbReference type="HAMAP" id="MF_00091">
    <property type="entry name" value="LuxS"/>
    <property type="match status" value="1"/>
</dbReference>
<dbReference type="InterPro" id="IPR037005">
    <property type="entry name" value="LuxS_sf"/>
</dbReference>
<dbReference type="InterPro" id="IPR011249">
    <property type="entry name" value="Metalloenz_LuxS/M16"/>
</dbReference>
<dbReference type="InterPro" id="IPR003815">
    <property type="entry name" value="S-ribosylhomocysteinase"/>
</dbReference>
<dbReference type="NCBIfam" id="NF002602">
    <property type="entry name" value="PRK02260.1-2"/>
    <property type="match status" value="1"/>
</dbReference>
<dbReference type="PANTHER" id="PTHR35799">
    <property type="entry name" value="S-RIBOSYLHOMOCYSTEINE LYASE"/>
    <property type="match status" value="1"/>
</dbReference>
<dbReference type="PANTHER" id="PTHR35799:SF1">
    <property type="entry name" value="S-RIBOSYLHOMOCYSTEINE LYASE"/>
    <property type="match status" value="1"/>
</dbReference>
<dbReference type="Pfam" id="PF02664">
    <property type="entry name" value="LuxS"/>
    <property type="match status" value="1"/>
</dbReference>
<dbReference type="PIRSF" id="PIRSF006160">
    <property type="entry name" value="AI2"/>
    <property type="match status" value="1"/>
</dbReference>
<dbReference type="PRINTS" id="PR01487">
    <property type="entry name" value="LUXSPROTEIN"/>
</dbReference>
<dbReference type="SUPFAM" id="SSF63411">
    <property type="entry name" value="LuxS/MPP-like metallohydrolase"/>
    <property type="match status" value="1"/>
</dbReference>
<accession>B5BEN0</accession>
<proteinExistence type="inferred from homology"/>